<feature type="chain" id="PRO_0000369727" description="Ribosomal RNA small subunit methyltransferase C">
    <location>
        <begin position="1"/>
        <end position="353"/>
    </location>
</feature>
<evidence type="ECO:0000255" key="1">
    <source>
        <dbReference type="HAMAP-Rule" id="MF_01862"/>
    </source>
</evidence>
<keyword id="KW-0963">Cytoplasm</keyword>
<keyword id="KW-0489">Methyltransferase</keyword>
<keyword id="KW-0698">rRNA processing</keyword>
<keyword id="KW-0949">S-adenosyl-L-methionine</keyword>
<keyword id="KW-0808">Transferase</keyword>
<proteinExistence type="inferred from homology"/>
<protein>
    <recommendedName>
        <fullName evidence="1">Ribosomal RNA small subunit methyltransferase C</fullName>
        <ecNumber evidence="1">2.1.1.172</ecNumber>
    </recommendedName>
    <alternativeName>
        <fullName evidence="1">16S rRNA m2G1207 methyltransferase</fullName>
    </alternativeName>
    <alternativeName>
        <fullName evidence="1">rRNA (guanine-N(2)-)-methyltransferase RsmC</fullName>
    </alternativeName>
</protein>
<dbReference type="EC" id="2.1.1.172" evidence="1"/>
<dbReference type="EMBL" id="CP000749">
    <property type="protein sequence ID" value="ABR69042.1"/>
    <property type="molecule type" value="Genomic_DNA"/>
</dbReference>
<dbReference type="SMR" id="A6VRG3"/>
<dbReference type="STRING" id="400668.Mmwyl1_0100"/>
<dbReference type="KEGG" id="mmw:Mmwyl1_0100"/>
<dbReference type="eggNOG" id="COG2813">
    <property type="taxonomic scope" value="Bacteria"/>
</dbReference>
<dbReference type="HOGENOM" id="CLU_049581_0_0_6"/>
<dbReference type="OrthoDB" id="29650at2"/>
<dbReference type="GO" id="GO:0005737">
    <property type="term" value="C:cytoplasm"/>
    <property type="evidence" value="ECO:0007669"/>
    <property type="project" value="UniProtKB-SubCell"/>
</dbReference>
<dbReference type="GO" id="GO:0052914">
    <property type="term" value="F:16S rRNA (guanine(1207)-N(2))-methyltransferase activity"/>
    <property type="evidence" value="ECO:0007669"/>
    <property type="project" value="UniProtKB-EC"/>
</dbReference>
<dbReference type="GO" id="GO:0003676">
    <property type="term" value="F:nucleic acid binding"/>
    <property type="evidence" value="ECO:0007669"/>
    <property type="project" value="InterPro"/>
</dbReference>
<dbReference type="CDD" id="cd02440">
    <property type="entry name" value="AdoMet_MTases"/>
    <property type="match status" value="1"/>
</dbReference>
<dbReference type="Gene3D" id="3.40.50.150">
    <property type="entry name" value="Vaccinia Virus protein VP39"/>
    <property type="match status" value="2"/>
</dbReference>
<dbReference type="HAMAP" id="MF_01862">
    <property type="entry name" value="16SrRNA_methyltr_C"/>
    <property type="match status" value="1"/>
</dbReference>
<dbReference type="InterPro" id="IPR002052">
    <property type="entry name" value="DNA_methylase_N6_adenine_CS"/>
</dbReference>
<dbReference type="InterPro" id="IPR013675">
    <property type="entry name" value="Mtase_sm_N"/>
</dbReference>
<dbReference type="InterPro" id="IPR023543">
    <property type="entry name" value="rRNA_ssu_MeTfrase_C"/>
</dbReference>
<dbReference type="InterPro" id="IPR046977">
    <property type="entry name" value="RsmC/RlmG"/>
</dbReference>
<dbReference type="InterPro" id="IPR029063">
    <property type="entry name" value="SAM-dependent_MTases_sf"/>
</dbReference>
<dbReference type="InterPro" id="IPR007848">
    <property type="entry name" value="Small_mtfrase_dom"/>
</dbReference>
<dbReference type="PANTHER" id="PTHR47816">
    <property type="entry name" value="RIBOSOMAL RNA SMALL SUBUNIT METHYLTRANSFERASE C"/>
    <property type="match status" value="1"/>
</dbReference>
<dbReference type="PANTHER" id="PTHR47816:SF4">
    <property type="entry name" value="RIBOSOMAL RNA SMALL SUBUNIT METHYLTRANSFERASE C"/>
    <property type="match status" value="1"/>
</dbReference>
<dbReference type="Pfam" id="PF05175">
    <property type="entry name" value="MTS"/>
    <property type="match status" value="1"/>
</dbReference>
<dbReference type="Pfam" id="PF08468">
    <property type="entry name" value="MTS_N"/>
    <property type="match status" value="1"/>
</dbReference>
<dbReference type="SUPFAM" id="SSF53335">
    <property type="entry name" value="S-adenosyl-L-methionine-dependent methyltransferases"/>
    <property type="match status" value="1"/>
</dbReference>
<gene>
    <name evidence="1" type="primary">rsmC</name>
    <name type="ordered locus">Mmwyl1_0100</name>
</gene>
<comment type="function">
    <text evidence="1">Specifically methylates the guanine in position 1207 of 16S rRNA in the 30S particle.</text>
</comment>
<comment type="catalytic activity">
    <reaction evidence="1">
        <text>guanosine(1207) in 16S rRNA + S-adenosyl-L-methionine = N(2)-methylguanosine(1207) in 16S rRNA + S-adenosyl-L-homocysteine + H(+)</text>
        <dbReference type="Rhea" id="RHEA:42736"/>
        <dbReference type="Rhea" id="RHEA-COMP:10213"/>
        <dbReference type="Rhea" id="RHEA-COMP:10214"/>
        <dbReference type="ChEBI" id="CHEBI:15378"/>
        <dbReference type="ChEBI" id="CHEBI:57856"/>
        <dbReference type="ChEBI" id="CHEBI:59789"/>
        <dbReference type="ChEBI" id="CHEBI:74269"/>
        <dbReference type="ChEBI" id="CHEBI:74481"/>
        <dbReference type="EC" id="2.1.1.172"/>
    </reaction>
</comment>
<comment type="subunit">
    <text evidence="1">Monomer.</text>
</comment>
<comment type="subcellular location">
    <subcellularLocation>
        <location evidence="1">Cytoplasm</location>
    </subcellularLocation>
</comment>
<comment type="similarity">
    <text evidence="1">Belongs to the methyltransferase superfamily. RsmC family.</text>
</comment>
<reference key="1">
    <citation type="submission" date="2007-06" db="EMBL/GenBank/DDBJ databases">
        <title>Complete sequence of Marinomonas sp. MWYL1.</title>
        <authorList>
            <consortium name="US DOE Joint Genome Institute"/>
            <person name="Copeland A."/>
            <person name="Lucas S."/>
            <person name="Lapidus A."/>
            <person name="Barry K."/>
            <person name="Glavina del Rio T."/>
            <person name="Dalin E."/>
            <person name="Tice H."/>
            <person name="Pitluck S."/>
            <person name="Kiss H."/>
            <person name="Brettin T."/>
            <person name="Bruce D."/>
            <person name="Detter J.C."/>
            <person name="Han C."/>
            <person name="Schmutz J."/>
            <person name="Larimer F."/>
            <person name="Land M."/>
            <person name="Hauser L."/>
            <person name="Kyrpides N."/>
            <person name="Kim E."/>
            <person name="Johnston A.W.B."/>
            <person name="Todd J.D."/>
            <person name="Rogers R."/>
            <person name="Wexler M."/>
            <person name="Bond P.L."/>
            <person name="Li Y."/>
            <person name="Richardson P."/>
        </authorList>
    </citation>
    <scope>NUCLEOTIDE SEQUENCE [LARGE SCALE GENOMIC DNA]</scope>
    <source>
        <strain>MWYL1</strain>
    </source>
</reference>
<name>RSMC_MARMS</name>
<organism>
    <name type="scientific">Marinomonas sp. (strain MWYL1)</name>
    <dbReference type="NCBI Taxonomy" id="400668"/>
    <lineage>
        <taxon>Bacteria</taxon>
        <taxon>Pseudomonadati</taxon>
        <taxon>Pseudomonadota</taxon>
        <taxon>Gammaproteobacteria</taxon>
        <taxon>Oceanospirillales</taxon>
        <taxon>Oceanospirillaceae</taxon>
        <taxon>Marinomonas</taxon>
    </lineage>
</organism>
<sequence>MNLNSTSQLLVRNEEGLVGKILFANPEDTYPLDLSRKADVYAWCQSKTYYDALLRVGFADEKLFLSEQWALEHGSDFDHIVIYQPKAKELLDYLLASVLPLLKEGGQIWLVGDNKSGVKSSMKRLEAGLDEVGKRDGAKHCLLYTGYKRRPTKPFVFEDWITTWKQEVAGQTLTLCSLPGVFGHGKLDKGTDILLNQLNQHRFMSDVASARILDFGCGDGIIALWLHNKTGARITALDDSVMALKATELTFAANQVSDAVTLIASNGLDEVKGRFNYVVTNPPFHSGVNTDYSIAESFFMMVKQHLTLNGELFVVANDFLRYPPILDAALGSHTRLYRDRGFAIYHGRQPKKK</sequence>
<accession>A6VRG3</accession>